<name>ATP62_PICP2</name>
<geneLocation type="plasmid">
    <name>pAQ7</name>
</geneLocation>
<sequence length="233" mass="25654">MQITPDNIIFYQYQFVVINATLVYTWLTMALLVIGAAWVTKKLVVRPKLPPWQNFLEIVVDGIYQHIAEVTQQEPEPYLAFVGTLFLFILTANLLTVVPGYQAPTGSLSTTTALAIAVFIAVPIYGIRQRGILGYLKSYLQPTPIMLPFQIIGEFSRTLALAVRLFGNIMSGNLLAAILLALVPLFVPVAMNLLGLVFGVIQAYVFAILALVYIASAATVQEKKQSISMEENS</sequence>
<reference key="1">
    <citation type="submission" date="2008-02" db="EMBL/GenBank/DDBJ databases">
        <title>Complete sequence of Synechococcus sp. PCC 7002.</title>
        <authorList>
            <person name="Li T."/>
            <person name="Zhao J."/>
            <person name="Zhao C."/>
            <person name="Liu Z."/>
            <person name="Zhao F."/>
            <person name="Marquardt J."/>
            <person name="Nomura C.T."/>
            <person name="Persson S."/>
            <person name="Detter J.C."/>
            <person name="Richardson P.M."/>
            <person name="Lanz C."/>
            <person name="Schuster S.C."/>
            <person name="Wang J."/>
            <person name="Li S."/>
            <person name="Huang X."/>
            <person name="Cai T."/>
            <person name="Yu Z."/>
            <person name="Luo J."/>
            <person name="Zhao J."/>
            <person name="Bryant D.A."/>
        </authorList>
    </citation>
    <scope>NUCLEOTIDE SEQUENCE [LARGE SCALE GENOMIC DNA]</scope>
    <source>
        <strain>ATCC 27264 / PCC 7002 / PR-6</strain>
    </source>
</reference>
<keyword id="KW-0066">ATP synthesis</keyword>
<keyword id="KW-0138">CF(0)</keyword>
<keyword id="KW-0375">Hydrogen ion transport</keyword>
<keyword id="KW-0406">Ion transport</keyword>
<keyword id="KW-0472">Membrane</keyword>
<keyword id="KW-0614">Plasmid</keyword>
<keyword id="KW-1185">Reference proteome</keyword>
<keyword id="KW-0793">Thylakoid</keyword>
<keyword id="KW-0812">Transmembrane</keyword>
<keyword id="KW-1133">Transmembrane helix</keyword>
<keyword id="KW-0813">Transport</keyword>
<feature type="chain" id="PRO_0000362484" description="ATP synthase subunit a 2">
    <location>
        <begin position="1"/>
        <end position="233"/>
    </location>
</feature>
<feature type="transmembrane region" description="Helical" evidence="1">
    <location>
        <begin position="15"/>
        <end position="35"/>
    </location>
</feature>
<feature type="transmembrane region" description="Helical" evidence="1">
    <location>
        <begin position="78"/>
        <end position="98"/>
    </location>
</feature>
<feature type="transmembrane region" description="Helical" evidence="1">
    <location>
        <begin position="107"/>
        <end position="127"/>
    </location>
</feature>
<feature type="transmembrane region" description="Helical" evidence="1">
    <location>
        <begin position="169"/>
        <end position="189"/>
    </location>
</feature>
<feature type="transmembrane region" description="Helical" evidence="1">
    <location>
        <begin position="194"/>
        <end position="214"/>
    </location>
</feature>
<gene>
    <name evidence="1" type="primary">atpB2</name>
    <name evidence="1" type="synonym">atpI2</name>
    <name type="ordered locus">SYNPCC7002_G0148</name>
</gene>
<comment type="function">
    <text evidence="1">Key component of the proton channel; it plays a direct role in the translocation of protons across the membrane.</text>
</comment>
<comment type="subunit">
    <text evidence="1">F-type ATPases have 2 components, CF(1) - the catalytic core - and CF(0) - the membrane proton channel. CF(1) has five subunits: alpha(3), beta(3), gamma(1), delta(1), epsilon(1). CF(0) has four main subunits: a, b, b' and c.</text>
</comment>
<comment type="subcellular location">
    <subcellularLocation>
        <location evidence="1">Cellular thylakoid membrane</location>
        <topology evidence="1">Multi-pass membrane protein</topology>
    </subcellularLocation>
</comment>
<comment type="similarity">
    <text evidence="1">Belongs to the ATPase A chain family.</text>
</comment>
<accession>B1XRK3</accession>
<organism>
    <name type="scientific">Picosynechococcus sp. (strain ATCC 27264 / PCC 7002 / PR-6)</name>
    <name type="common">Agmenellum quadruplicatum</name>
    <dbReference type="NCBI Taxonomy" id="32049"/>
    <lineage>
        <taxon>Bacteria</taxon>
        <taxon>Bacillati</taxon>
        <taxon>Cyanobacteriota</taxon>
        <taxon>Cyanophyceae</taxon>
        <taxon>Oscillatoriophycideae</taxon>
        <taxon>Chroococcales</taxon>
        <taxon>Geminocystaceae</taxon>
        <taxon>Picosynechococcus</taxon>
    </lineage>
</organism>
<dbReference type="EMBL" id="CP000957">
    <property type="protein sequence ID" value="ACB01188.1"/>
    <property type="molecule type" value="Genomic_DNA"/>
</dbReference>
<dbReference type="RefSeq" id="WP_012305625.1">
    <property type="nucleotide sequence ID" value="NZ_JAHHPU010000008.1"/>
</dbReference>
<dbReference type="SMR" id="B1XRK3"/>
<dbReference type="KEGG" id="syp:SYNPCC7002_G0148"/>
<dbReference type="HOGENOM" id="CLU_041018_2_5_3"/>
<dbReference type="Proteomes" id="UP000001688">
    <property type="component" value="Plasmid pAQ7"/>
</dbReference>
<dbReference type="GO" id="GO:0031676">
    <property type="term" value="C:plasma membrane-derived thylakoid membrane"/>
    <property type="evidence" value="ECO:0007669"/>
    <property type="project" value="UniProtKB-SubCell"/>
</dbReference>
<dbReference type="GO" id="GO:0045259">
    <property type="term" value="C:proton-transporting ATP synthase complex"/>
    <property type="evidence" value="ECO:0007669"/>
    <property type="project" value="UniProtKB-KW"/>
</dbReference>
<dbReference type="GO" id="GO:0046933">
    <property type="term" value="F:proton-transporting ATP synthase activity, rotational mechanism"/>
    <property type="evidence" value="ECO:0007669"/>
    <property type="project" value="UniProtKB-UniRule"/>
</dbReference>
<dbReference type="GO" id="GO:0042777">
    <property type="term" value="P:proton motive force-driven plasma membrane ATP synthesis"/>
    <property type="evidence" value="ECO:0007669"/>
    <property type="project" value="TreeGrafter"/>
</dbReference>
<dbReference type="CDD" id="cd00310">
    <property type="entry name" value="ATP-synt_Fo_a_6"/>
    <property type="match status" value="1"/>
</dbReference>
<dbReference type="Gene3D" id="1.20.120.220">
    <property type="entry name" value="ATP synthase, F0 complex, subunit A"/>
    <property type="match status" value="1"/>
</dbReference>
<dbReference type="HAMAP" id="MF_01393">
    <property type="entry name" value="ATP_synth_a_bact"/>
    <property type="match status" value="1"/>
</dbReference>
<dbReference type="InterPro" id="IPR017692">
    <property type="entry name" value="Alt_ATP_synth_F0_Asu"/>
</dbReference>
<dbReference type="InterPro" id="IPR045082">
    <property type="entry name" value="ATP_syn_F0_a_bact/chloroplast"/>
</dbReference>
<dbReference type="InterPro" id="IPR000568">
    <property type="entry name" value="ATP_synth_F0_asu"/>
</dbReference>
<dbReference type="InterPro" id="IPR023011">
    <property type="entry name" value="ATP_synth_F0_asu_AS"/>
</dbReference>
<dbReference type="InterPro" id="IPR035908">
    <property type="entry name" value="F0_ATP_A_sf"/>
</dbReference>
<dbReference type="NCBIfam" id="TIGR03306">
    <property type="entry name" value="altF1_A"/>
    <property type="match status" value="1"/>
</dbReference>
<dbReference type="NCBIfam" id="TIGR01131">
    <property type="entry name" value="ATP_synt_6_or_A"/>
    <property type="match status" value="1"/>
</dbReference>
<dbReference type="NCBIfam" id="NF004481">
    <property type="entry name" value="PRK05815.2-3"/>
    <property type="match status" value="1"/>
</dbReference>
<dbReference type="PANTHER" id="PTHR42823">
    <property type="entry name" value="ATP SYNTHASE SUBUNIT A, CHLOROPLASTIC"/>
    <property type="match status" value="1"/>
</dbReference>
<dbReference type="PANTHER" id="PTHR42823:SF3">
    <property type="entry name" value="ATP SYNTHASE SUBUNIT A, CHLOROPLASTIC"/>
    <property type="match status" value="1"/>
</dbReference>
<dbReference type="Pfam" id="PF00119">
    <property type="entry name" value="ATP-synt_A"/>
    <property type="match status" value="1"/>
</dbReference>
<dbReference type="PRINTS" id="PR00123">
    <property type="entry name" value="ATPASEA"/>
</dbReference>
<dbReference type="SUPFAM" id="SSF81336">
    <property type="entry name" value="F1F0 ATP synthase subunit A"/>
    <property type="match status" value="1"/>
</dbReference>
<dbReference type="PROSITE" id="PS00449">
    <property type="entry name" value="ATPASE_A"/>
    <property type="match status" value="1"/>
</dbReference>
<proteinExistence type="inferred from homology"/>
<protein>
    <recommendedName>
        <fullName evidence="1">ATP synthase subunit a 2</fullName>
    </recommendedName>
    <alternativeName>
        <fullName evidence="1">ATP synthase F0 sector subunit a 2</fullName>
    </alternativeName>
    <alternativeName>
        <fullName evidence="1">F-ATPase subunit 6 2</fullName>
    </alternativeName>
</protein>
<evidence type="ECO:0000255" key="1">
    <source>
        <dbReference type="HAMAP-Rule" id="MF_01393"/>
    </source>
</evidence>